<reference key="1">
    <citation type="journal article" date="2010" name="DNA Res.">
        <title>Complete genomic structure of the cultivated rice endophyte Azospirillum sp. B510.</title>
        <authorList>
            <person name="Kaneko T."/>
            <person name="Minamisawa K."/>
            <person name="Isawa T."/>
            <person name="Nakatsukasa H."/>
            <person name="Mitsui H."/>
            <person name="Kawaharada Y."/>
            <person name="Nakamura Y."/>
            <person name="Watanabe A."/>
            <person name="Kawashima K."/>
            <person name="Ono A."/>
            <person name="Shimizu Y."/>
            <person name="Takahashi C."/>
            <person name="Minami C."/>
            <person name="Fujishiro T."/>
            <person name="Kohara M."/>
            <person name="Katoh M."/>
            <person name="Nakazaki N."/>
            <person name="Nakayama S."/>
            <person name="Yamada M."/>
            <person name="Tabata S."/>
            <person name="Sato S."/>
        </authorList>
    </citation>
    <scope>NUCLEOTIDE SEQUENCE [LARGE SCALE GENOMIC DNA]</scope>
    <source>
        <strain>B510</strain>
    </source>
</reference>
<evidence type="ECO:0000255" key="1">
    <source>
        <dbReference type="HAMAP-Rule" id="MF_02117"/>
    </source>
</evidence>
<gene>
    <name evidence="1" type="primary">cowN</name>
    <name type="ordered locus">AZL_024300</name>
</gene>
<comment type="function">
    <text evidence="1">Is required to sustain N(2)-dependent growth in the presence of low levels of carbon monoxide (CO). Probably acts by protecting the N(2) fixation ability of the nitrogenase complex, which is inactivated in the presence of CO.</text>
</comment>
<comment type="similarity">
    <text evidence="1">Belongs to the CowN family.</text>
</comment>
<feature type="chain" id="PRO_0000407251" description="N(2)-fixation sustaining protein CowN">
    <location>
        <begin position="1"/>
        <end position="98"/>
    </location>
</feature>
<sequence length="98" mass="11371">MDSFDAPDRYVSFKGIDCEGNSRRIIDRLHMHIDDPAKTNAFWERFRAKLAIAEDPLKRQADGLCLLCANIYYIADLFEEHDDEDGLAMLRQLEDECC</sequence>
<dbReference type="EMBL" id="AP010946">
    <property type="protein sequence ID" value="BAI73068.1"/>
    <property type="molecule type" value="Genomic_DNA"/>
</dbReference>
<dbReference type="RefSeq" id="WP_012974992.1">
    <property type="nucleotide sequence ID" value="NC_013854.1"/>
</dbReference>
<dbReference type="STRING" id="137722.AZL_024300"/>
<dbReference type="KEGG" id="azl:AZL_024300"/>
<dbReference type="HOGENOM" id="CLU_149349_0_0_5"/>
<dbReference type="OrthoDB" id="7689335at2"/>
<dbReference type="Proteomes" id="UP000002040">
    <property type="component" value="Chromosome"/>
</dbReference>
<dbReference type="GO" id="GO:0009399">
    <property type="term" value="P:nitrogen fixation"/>
    <property type="evidence" value="ECO:0007669"/>
    <property type="project" value="UniProtKB-UniRule"/>
</dbReference>
<dbReference type="HAMAP" id="MF_02117">
    <property type="entry name" value="CowN"/>
    <property type="match status" value="1"/>
</dbReference>
<dbReference type="InterPro" id="IPR024899">
    <property type="entry name" value="CowN"/>
</dbReference>
<dbReference type="NCBIfam" id="NF033689">
    <property type="entry name" value="N2Fix_CO_CowN"/>
    <property type="match status" value="1"/>
</dbReference>
<dbReference type="Pfam" id="PF20543">
    <property type="entry name" value="CowN"/>
    <property type="match status" value="1"/>
</dbReference>
<organism>
    <name type="scientific">Azospirillum sp. (strain B510)</name>
    <dbReference type="NCBI Taxonomy" id="137722"/>
    <lineage>
        <taxon>Bacteria</taxon>
        <taxon>Pseudomonadati</taxon>
        <taxon>Pseudomonadota</taxon>
        <taxon>Alphaproteobacteria</taxon>
        <taxon>Rhodospirillales</taxon>
        <taxon>Azospirillaceae</taxon>
        <taxon>Azospirillum</taxon>
    </lineage>
</organism>
<accession>D3NXD9</accession>
<keyword id="KW-0535">Nitrogen fixation</keyword>
<keyword id="KW-1185">Reference proteome</keyword>
<name>COWN_AZOS1</name>
<proteinExistence type="inferred from homology"/>
<protein>
    <recommendedName>
        <fullName evidence="1">N(2)-fixation sustaining protein CowN</fullName>
    </recommendedName>
    <alternativeName>
        <fullName evidence="1">CO weal-nitrogenase</fullName>
    </alternativeName>
</protein>